<comment type="function">
    <text evidence="1">May play a role in DNA repair. It seems to be involved in an RecBC-independent recombinational process of DNA repair. It may act with RecF and RecO.</text>
</comment>
<comment type="similarity">
    <text evidence="1">Belongs to the RecR family.</text>
</comment>
<sequence length="201" mass="21457">MPQAVAGPEIERLIQLLGRMPGLGPRSARRAALQLIKKRETLLAPLADAMRIAADRIVVCHACGNVDTSDPCTICRDETRDPTTLVVVEDVSDLWALERSGAVKARYHVLGGVLSALDGVRPEHLTIALLVERASAPGVKEIILALNATVDGQTTAHYVTESLKPLGLTITRLAHGVPVGGELDYLDEGTLTAAIRSRTAF</sequence>
<dbReference type="EMBL" id="CP001029">
    <property type="protein sequence ID" value="ACB79758.1"/>
    <property type="molecule type" value="Genomic_DNA"/>
</dbReference>
<dbReference type="RefSeq" id="WP_012453506.1">
    <property type="nucleotide sequence ID" value="NC_010725.1"/>
</dbReference>
<dbReference type="SMR" id="B1ZGA0"/>
<dbReference type="STRING" id="441620.Mpop_1594"/>
<dbReference type="KEGG" id="mpo:Mpop_1594"/>
<dbReference type="eggNOG" id="COG0353">
    <property type="taxonomic scope" value="Bacteria"/>
</dbReference>
<dbReference type="HOGENOM" id="CLU_060739_1_1_5"/>
<dbReference type="OrthoDB" id="9802672at2"/>
<dbReference type="Proteomes" id="UP000007136">
    <property type="component" value="Chromosome"/>
</dbReference>
<dbReference type="GO" id="GO:0003677">
    <property type="term" value="F:DNA binding"/>
    <property type="evidence" value="ECO:0007669"/>
    <property type="project" value="UniProtKB-UniRule"/>
</dbReference>
<dbReference type="GO" id="GO:0008270">
    <property type="term" value="F:zinc ion binding"/>
    <property type="evidence" value="ECO:0007669"/>
    <property type="project" value="UniProtKB-KW"/>
</dbReference>
<dbReference type="GO" id="GO:0006310">
    <property type="term" value="P:DNA recombination"/>
    <property type="evidence" value="ECO:0007669"/>
    <property type="project" value="UniProtKB-UniRule"/>
</dbReference>
<dbReference type="GO" id="GO:0006281">
    <property type="term" value="P:DNA repair"/>
    <property type="evidence" value="ECO:0007669"/>
    <property type="project" value="UniProtKB-UniRule"/>
</dbReference>
<dbReference type="CDD" id="cd01025">
    <property type="entry name" value="TOPRIM_recR"/>
    <property type="match status" value="1"/>
</dbReference>
<dbReference type="Gene3D" id="3.40.1360.10">
    <property type="match status" value="1"/>
</dbReference>
<dbReference type="Gene3D" id="6.10.250.240">
    <property type="match status" value="1"/>
</dbReference>
<dbReference type="Gene3D" id="1.10.8.420">
    <property type="entry name" value="RecR Domain 1"/>
    <property type="match status" value="1"/>
</dbReference>
<dbReference type="HAMAP" id="MF_00017">
    <property type="entry name" value="RecR"/>
    <property type="match status" value="1"/>
</dbReference>
<dbReference type="InterPro" id="IPR000093">
    <property type="entry name" value="DNA_Rcmb_RecR"/>
</dbReference>
<dbReference type="InterPro" id="IPR023627">
    <property type="entry name" value="Rcmb_RecR"/>
</dbReference>
<dbReference type="InterPro" id="IPR015967">
    <property type="entry name" value="Rcmb_RecR_Znf"/>
</dbReference>
<dbReference type="InterPro" id="IPR006171">
    <property type="entry name" value="TOPRIM_dom"/>
</dbReference>
<dbReference type="InterPro" id="IPR034137">
    <property type="entry name" value="TOPRIM_RecR"/>
</dbReference>
<dbReference type="NCBIfam" id="TIGR00615">
    <property type="entry name" value="recR"/>
    <property type="match status" value="1"/>
</dbReference>
<dbReference type="PANTHER" id="PTHR30446">
    <property type="entry name" value="RECOMBINATION PROTEIN RECR"/>
    <property type="match status" value="1"/>
</dbReference>
<dbReference type="PANTHER" id="PTHR30446:SF0">
    <property type="entry name" value="RECOMBINATION PROTEIN RECR"/>
    <property type="match status" value="1"/>
</dbReference>
<dbReference type="Pfam" id="PF21175">
    <property type="entry name" value="RecR_C"/>
    <property type="match status" value="1"/>
</dbReference>
<dbReference type="Pfam" id="PF21176">
    <property type="entry name" value="RecR_HhH"/>
    <property type="match status" value="1"/>
</dbReference>
<dbReference type="Pfam" id="PF13662">
    <property type="entry name" value="Toprim_4"/>
    <property type="match status" value="1"/>
</dbReference>
<dbReference type="SMART" id="SM00493">
    <property type="entry name" value="TOPRIM"/>
    <property type="match status" value="1"/>
</dbReference>
<dbReference type="SUPFAM" id="SSF111304">
    <property type="entry name" value="Recombination protein RecR"/>
    <property type="match status" value="1"/>
</dbReference>
<dbReference type="PROSITE" id="PS01300">
    <property type="entry name" value="RECR"/>
    <property type="match status" value="1"/>
</dbReference>
<dbReference type="PROSITE" id="PS50880">
    <property type="entry name" value="TOPRIM"/>
    <property type="match status" value="1"/>
</dbReference>
<feature type="chain" id="PRO_1000089745" description="Recombination protein RecR">
    <location>
        <begin position="1"/>
        <end position="201"/>
    </location>
</feature>
<feature type="domain" description="Toprim" evidence="1">
    <location>
        <begin position="83"/>
        <end position="178"/>
    </location>
</feature>
<feature type="zinc finger region" description="C4-type" evidence="1">
    <location>
        <begin position="60"/>
        <end position="75"/>
    </location>
</feature>
<organism>
    <name type="scientific">Methylorubrum populi (strain ATCC BAA-705 / NCIMB 13946 / BJ001)</name>
    <name type="common">Methylobacterium populi</name>
    <dbReference type="NCBI Taxonomy" id="441620"/>
    <lineage>
        <taxon>Bacteria</taxon>
        <taxon>Pseudomonadati</taxon>
        <taxon>Pseudomonadota</taxon>
        <taxon>Alphaproteobacteria</taxon>
        <taxon>Hyphomicrobiales</taxon>
        <taxon>Methylobacteriaceae</taxon>
        <taxon>Methylorubrum</taxon>
    </lineage>
</organism>
<keyword id="KW-0227">DNA damage</keyword>
<keyword id="KW-0233">DNA recombination</keyword>
<keyword id="KW-0234">DNA repair</keyword>
<keyword id="KW-0479">Metal-binding</keyword>
<keyword id="KW-0862">Zinc</keyword>
<keyword id="KW-0863">Zinc-finger</keyword>
<gene>
    <name evidence="1" type="primary">recR</name>
    <name type="ordered locus">Mpop_1594</name>
</gene>
<protein>
    <recommendedName>
        <fullName evidence="1">Recombination protein RecR</fullName>
    </recommendedName>
</protein>
<evidence type="ECO:0000255" key="1">
    <source>
        <dbReference type="HAMAP-Rule" id="MF_00017"/>
    </source>
</evidence>
<accession>B1ZGA0</accession>
<reference key="1">
    <citation type="submission" date="2008-04" db="EMBL/GenBank/DDBJ databases">
        <title>Complete sequence of chromosome of Methylobacterium populi BJ001.</title>
        <authorList>
            <consortium name="US DOE Joint Genome Institute"/>
            <person name="Copeland A."/>
            <person name="Lucas S."/>
            <person name="Lapidus A."/>
            <person name="Glavina del Rio T."/>
            <person name="Dalin E."/>
            <person name="Tice H."/>
            <person name="Bruce D."/>
            <person name="Goodwin L."/>
            <person name="Pitluck S."/>
            <person name="Chertkov O."/>
            <person name="Brettin T."/>
            <person name="Detter J.C."/>
            <person name="Han C."/>
            <person name="Kuske C.R."/>
            <person name="Schmutz J."/>
            <person name="Larimer F."/>
            <person name="Land M."/>
            <person name="Hauser L."/>
            <person name="Kyrpides N."/>
            <person name="Mikhailova N."/>
            <person name="Marx C."/>
            <person name="Richardson P."/>
        </authorList>
    </citation>
    <scope>NUCLEOTIDE SEQUENCE [LARGE SCALE GENOMIC DNA]</scope>
    <source>
        <strain>ATCC BAA-705 / NCIMB 13946 / BJ001</strain>
    </source>
</reference>
<name>RECR_METPB</name>
<proteinExistence type="inferred from homology"/>